<sequence>MPFLGQDWRSPGQSWVKTADGWKRFLDEKSGSFVSDLGSYCSKEVYNKENLFNSLNYDVAAKKRKKDMLNSKTKTQYFHQEKWIYVHKGSTKERHGYCTLGEAFNRLDFSTAILDSRRFNYVVRLLELIAKSQLTSLSGIAQKNFMNILEKVVLKVLEDQQNIRLIRELLQTLYTSLCTLVQRVGKSVLVGNINMWVYRMETILHWQQQLNNIQITRPAFKGLTFTDLPLCLQLNIMQRLSDGRDLVSLGQVAPDLHVLSEDRLLWKKLCQYHFSERQIRKRLILSDKGQLDWKKMYFKLARCYPRKEQYGDTLQLCRHCHILSWKGTDHPCTANNPESCSISLSPQDFINLFKF</sequence>
<accession>Q2KHT6</accession>
<organism>
    <name type="scientific">Bos taurus</name>
    <name type="common">Bovine</name>
    <dbReference type="NCBI Taxonomy" id="9913"/>
    <lineage>
        <taxon>Eukaryota</taxon>
        <taxon>Metazoa</taxon>
        <taxon>Chordata</taxon>
        <taxon>Craniata</taxon>
        <taxon>Vertebrata</taxon>
        <taxon>Euteleostomi</taxon>
        <taxon>Mammalia</taxon>
        <taxon>Eutheria</taxon>
        <taxon>Laurasiatheria</taxon>
        <taxon>Artiodactyla</taxon>
        <taxon>Ruminantia</taxon>
        <taxon>Pecora</taxon>
        <taxon>Bovidae</taxon>
        <taxon>Bovinae</taxon>
        <taxon>Bos</taxon>
    </lineage>
</organism>
<gene>
    <name type="primary">FBXO32</name>
</gene>
<comment type="function">
    <text evidence="1">Substrate recognition component of a SCF (SKP1-CUL1-F-box protein) E3 ubiquitin-protein ligase complex which mediates the ubiquitination and subsequent proteasomal degradation of target proteins. Probably recognizes and binds to phosphorylated target proteins during skeletal muscle atrophy. Recognizes TERF1 (By similarity).</text>
</comment>
<comment type="pathway">
    <text>Protein modification; protein ubiquitination.</text>
</comment>
<comment type="subunit">
    <text evidence="2">Part of the SCF (SKP1-CUL1-F-box) E3 ubiquitin-protein ligase complex SCF(FBXO32) formed of CUL1, SKP1, RBX1 and FBXO32.</text>
</comment>
<comment type="subcellular location">
    <subcellularLocation>
        <location evidence="2">Cytoplasm</location>
    </subcellularLocation>
    <subcellularLocation>
        <location evidence="2">Nucleus</location>
    </subcellularLocation>
    <text evidence="2">Shuttles between cytoplasm and the nucleus.</text>
</comment>
<proteinExistence type="evidence at transcript level"/>
<reference key="1">
    <citation type="submission" date="2006-01" db="EMBL/GenBank/DDBJ databases">
        <authorList>
            <consortium name="NIH - Mammalian Gene Collection (MGC) project"/>
        </authorList>
    </citation>
    <scope>NUCLEOTIDE SEQUENCE [LARGE SCALE MRNA]</scope>
    <source>
        <strain>Hereford</strain>
        <tissue>Hypothalamus</tissue>
    </source>
</reference>
<keyword id="KW-0963">Cytoplasm</keyword>
<keyword id="KW-0539">Nucleus</keyword>
<keyword id="KW-1185">Reference proteome</keyword>
<keyword id="KW-0833">Ubl conjugation pathway</keyword>
<feature type="chain" id="PRO_0000244593" description="F-box only protein 32">
    <location>
        <begin position="1"/>
        <end position="355"/>
    </location>
</feature>
<feature type="domain" description="F-box">
    <location>
        <begin position="223"/>
        <end position="271"/>
    </location>
</feature>
<feature type="short sequence motif" description="Nuclear localization signal" evidence="1">
    <location>
        <begin position="62"/>
        <end position="67"/>
    </location>
</feature>
<feature type="short sequence motif" description="Nuclear export signal" evidence="1">
    <location>
        <begin position="169"/>
        <end position="173"/>
    </location>
</feature>
<feature type="short sequence motif" description="Bipartite nuclear localization signal" evidence="1">
    <location>
        <begin position="280"/>
        <end position="295"/>
    </location>
</feature>
<name>FBX32_BOVIN</name>
<protein>
    <recommendedName>
        <fullName>F-box only protein 32</fullName>
    </recommendedName>
</protein>
<dbReference type="EMBL" id="BC112888">
    <property type="protein sequence ID" value="AAI12889.1"/>
    <property type="molecule type" value="mRNA"/>
</dbReference>
<dbReference type="RefSeq" id="NP_001039620.1">
    <property type="nucleotide sequence ID" value="NM_001046155.1"/>
</dbReference>
<dbReference type="FunCoup" id="Q2KHT6">
    <property type="interactions" value="688"/>
</dbReference>
<dbReference type="STRING" id="9913.ENSBTAP00000021554"/>
<dbReference type="PaxDb" id="9913-ENSBTAP00000021554"/>
<dbReference type="Ensembl" id="ENSBTAT00000021554.5">
    <property type="protein sequence ID" value="ENSBTAP00000021554.4"/>
    <property type="gene ID" value="ENSBTAG00000016194.6"/>
</dbReference>
<dbReference type="GeneID" id="513776"/>
<dbReference type="KEGG" id="bta:513776"/>
<dbReference type="CTD" id="114907"/>
<dbReference type="VEuPathDB" id="HostDB:ENSBTAG00000016194"/>
<dbReference type="VGNC" id="VGNC:28905">
    <property type="gene designation" value="FBXO32"/>
</dbReference>
<dbReference type="eggNOG" id="KOG3926">
    <property type="taxonomic scope" value="Eukaryota"/>
</dbReference>
<dbReference type="GeneTree" id="ENSGT00390000004915"/>
<dbReference type="HOGENOM" id="CLU_065667_0_0_1"/>
<dbReference type="InParanoid" id="Q2KHT6"/>
<dbReference type="OMA" id="NINTWVH"/>
<dbReference type="OrthoDB" id="9991467at2759"/>
<dbReference type="TreeFam" id="TF313070"/>
<dbReference type="Reactome" id="R-BTA-8951664">
    <property type="pathway name" value="Neddylation"/>
</dbReference>
<dbReference type="Reactome" id="R-BTA-983168">
    <property type="pathway name" value="Antigen processing: Ubiquitination &amp; Proteasome degradation"/>
</dbReference>
<dbReference type="UniPathway" id="UPA00143"/>
<dbReference type="Proteomes" id="UP000009136">
    <property type="component" value="Chromosome 14"/>
</dbReference>
<dbReference type="Bgee" id="ENSBTAG00000016194">
    <property type="expression patterns" value="Expressed in longissimus thoracis muscle and 109 other cell types or tissues"/>
</dbReference>
<dbReference type="GO" id="GO:0005737">
    <property type="term" value="C:cytoplasm"/>
    <property type="evidence" value="ECO:0000250"/>
    <property type="project" value="UniProtKB"/>
</dbReference>
<dbReference type="GO" id="GO:0005634">
    <property type="term" value="C:nucleus"/>
    <property type="evidence" value="ECO:0000318"/>
    <property type="project" value="GO_Central"/>
</dbReference>
<dbReference type="GO" id="GO:0019005">
    <property type="term" value="C:SCF ubiquitin ligase complex"/>
    <property type="evidence" value="ECO:0000318"/>
    <property type="project" value="GO_Central"/>
</dbReference>
<dbReference type="GO" id="GO:0016567">
    <property type="term" value="P:protein ubiquitination"/>
    <property type="evidence" value="ECO:0000250"/>
    <property type="project" value="UniProtKB"/>
</dbReference>
<dbReference type="GO" id="GO:0014894">
    <property type="term" value="P:response to denervation involved in regulation of muscle adaptation"/>
    <property type="evidence" value="ECO:0000250"/>
    <property type="project" value="UniProtKB"/>
</dbReference>
<dbReference type="CDD" id="cd22103">
    <property type="entry name" value="F-box_FBXO32"/>
    <property type="match status" value="1"/>
</dbReference>
<dbReference type="FunFam" id="1.20.1280.50:FF:000017">
    <property type="entry name" value="F-box only protein 32"/>
    <property type="match status" value="1"/>
</dbReference>
<dbReference type="Gene3D" id="1.20.1280.50">
    <property type="match status" value="1"/>
</dbReference>
<dbReference type="InterPro" id="IPR036047">
    <property type="entry name" value="F-box-like_dom_sf"/>
</dbReference>
<dbReference type="InterPro" id="IPR001810">
    <property type="entry name" value="F-box_dom"/>
</dbReference>
<dbReference type="InterPro" id="IPR040394">
    <property type="entry name" value="FBX25/32"/>
</dbReference>
<dbReference type="PANTHER" id="PTHR13123:SF6">
    <property type="entry name" value="F-BOX ONLY PROTEIN 32"/>
    <property type="match status" value="1"/>
</dbReference>
<dbReference type="PANTHER" id="PTHR13123">
    <property type="entry name" value="LD30288P"/>
    <property type="match status" value="1"/>
</dbReference>
<dbReference type="Pfam" id="PF12937">
    <property type="entry name" value="F-box-like"/>
    <property type="match status" value="1"/>
</dbReference>
<dbReference type="SUPFAM" id="SSF81383">
    <property type="entry name" value="F-box domain"/>
    <property type="match status" value="1"/>
</dbReference>
<evidence type="ECO:0000250" key="1"/>
<evidence type="ECO:0000250" key="2">
    <source>
        <dbReference type="UniProtKB" id="Q969P5"/>
    </source>
</evidence>